<gene>
    <name evidence="1" type="primary">rpmG</name>
    <name type="ordered locus">XAC4158</name>
</gene>
<name>RL33_XANAC</name>
<keyword id="KW-0687">Ribonucleoprotein</keyword>
<keyword id="KW-0689">Ribosomal protein</keyword>
<comment type="similarity">
    <text evidence="1">Belongs to the bacterial ribosomal protein bL33 family.</text>
</comment>
<dbReference type="EMBL" id="AE008923">
    <property type="protein sequence ID" value="AAM38993.1"/>
    <property type="molecule type" value="Genomic_DNA"/>
</dbReference>
<dbReference type="RefSeq" id="WP_002809462.1">
    <property type="nucleotide sequence ID" value="NC_003919.1"/>
</dbReference>
<dbReference type="SMR" id="P66238"/>
<dbReference type="GeneID" id="97512303"/>
<dbReference type="KEGG" id="xac:XAC4158"/>
<dbReference type="eggNOG" id="COG0267">
    <property type="taxonomic scope" value="Bacteria"/>
</dbReference>
<dbReference type="HOGENOM" id="CLU_190949_1_1_6"/>
<dbReference type="Proteomes" id="UP000000576">
    <property type="component" value="Chromosome"/>
</dbReference>
<dbReference type="GO" id="GO:0022625">
    <property type="term" value="C:cytosolic large ribosomal subunit"/>
    <property type="evidence" value="ECO:0007669"/>
    <property type="project" value="TreeGrafter"/>
</dbReference>
<dbReference type="GO" id="GO:0003735">
    <property type="term" value="F:structural constituent of ribosome"/>
    <property type="evidence" value="ECO:0007669"/>
    <property type="project" value="InterPro"/>
</dbReference>
<dbReference type="GO" id="GO:0006412">
    <property type="term" value="P:translation"/>
    <property type="evidence" value="ECO:0007669"/>
    <property type="project" value="UniProtKB-UniRule"/>
</dbReference>
<dbReference type="FunFam" id="2.20.28.120:FF:000001">
    <property type="entry name" value="50S ribosomal protein L33"/>
    <property type="match status" value="1"/>
</dbReference>
<dbReference type="Gene3D" id="2.20.28.120">
    <property type="entry name" value="Ribosomal protein L33"/>
    <property type="match status" value="1"/>
</dbReference>
<dbReference type="HAMAP" id="MF_00294">
    <property type="entry name" value="Ribosomal_bL33"/>
    <property type="match status" value="1"/>
</dbReference>
<dbReference type="InterPro" id="IPR001705">
    <property type="entry name" value="Ribosomal_bL33"/>
</dbReference>
<dbReference type="InterPro" id="IPR018264">
    <property type="entry name" value="Ribosomal_bL33_CS"/>
</dbReference>
<dbReference type="InterPro" id="IPR038584">
    <property type="entry name" value="Ribosomal_bL33_sf"/>
</dbReference>
<dbReference type="InterPro" id="IPR011332">
    <property type="entry name" value="Ribosomal_zn-bd"/>
</dbReference>
<dbReference type="NCBIfam" id="NF001860">
    <property type="entry name" value="PRK00595.1"/>
    <property type="match status" value="1"/>
</dbReference>
<dbReference type="NCBIfam" id="TIGR01023">
    <property type="entry name" value="rpmG_bact"/>
    <property type="match status" value="1"/>
</dbReference>
<dbReference type="PANTHER" id="PTHR15238">
    <property type="entry name" value="54S RIBOSOMAL PROTEIN L39, MITOCHONDRIAL"/>
    <property type="match status" value="1"/>
</dbReference>
<dbReference type="PANTHER" id="PTHR15238:SF1">
    <property type="entry name" value="LARGE RIBOSOMAL SUBUNIT PROTEIN BL33M"/>
    <property type="match status" value="1"/>
</dbReference>
<dbReference type="Pfam" id="PF00471">
    <property type="entry name" value="Ribosomal_L33"/>
    <property type="match status" value="1"/>
</dbReference>
<dbReference type="SUPFAM" id="SSF57829">
    <property type="entry name" value="Zn-binding ribosomal proteins"/>
    <property type="match status" value="1"/>
</dbReference>
<dbReference type="PROSITE" id="PS00582">
    <property type="entry name" value="RIBOSOMAL_L33"/>
    <property type="match status" value="1"/>
</dbReference>
<sequence>MAKGKRDKIRMISSAATGHFYTTDKNKKNTPGKMEMMKYDPVVRKHVMYKEGKIK</sequence>
<proteinExistence type="inferred from homology"/>
<feature type="chain" id="PRO_0000170266" description="Large ribosomal subunit protein bL33">
    <location>
        <begin position="1"/>
        <end position="55"/>
    </location>
</feature>
<organism>
    <name type="scientific">Xanthomonas axonopodis pv. citri (strain 306)</name>
    <dbReference type="NCBI Taxonomy" id="190486"/>
    <lineage>
        <taxon>Bacteria</taxon>
        <taxon>Pseudomonadati</taxon>
        <taxon>Pseudomonadota</taxon>
        <taxon>Gammaproteobacteria</taxon>
        <taxon>Lysobacterales</taxon>
        <taxon>Lysobacteraceae</taxon>
        <taxon>Xanthomonas</taxon>
    </lineage>
</organism>
<accession>P66238</accession>
<accession>Q8NL17</accession>
<protein>
    <recommendedName>
        <fullName evidence="1">Large ribosomal subunit protein bL33</fullName>
    </recommendedName>
    <alternativeName>
        <fullName evidence="2">50S ribosomal protein L33</fullName>
    </alternativeName>
</protein>
<reference key="1">
    <citation type="journal article" date="2002" name="Nature">
        <title>Comparison of the genomes of two Xanthomonas pathogens with differing host specificities.</title>
        <authorList>
            <person name="da Silva A.C.R."/>
            <person name="Ferro J.A."/>
            <person name="Reinach F.C."/>
            <person name="Farah C.S."/>
            <person name="Furlan L.R."/>
            <person name="Quaggio R.B."/>
            <person name="Monteiro-Vitorello C.B."/>
            <person name="Van Sluys M.A."/>
            <person name="Almeida N.F. Jr."/>
            <person name="Alves L.M.C."/>
            <person name="do Amaral A.M."/>
            <person name="Bertolini M.C."/>
            <person name="Camargo L.E.A."/>
            <person name="Camarotte G."/>
            <person name="Cannavan F."/>
            <person name="Cardozo J."/>
            <person name="Chambergo F."/>
            <person name="Ciapina L.P."/>
            <person name="Cicarelli R.M.B."/>
            <person name="Coutinho L.L."/>
            <person name="Cursino-Santos J.R."/>
            <person name="El-Dorry H."/>
            <person name="Faria J.B."/>
            <person name="Ferreira A.J.S."/>
            <person name="Ferreira R.C.C."/>
            <person name="Ferro M.I.T."/>
            <person name="Formighieri E.F."/>
            <person name="Franco M.C."/>
            <person name="Greggio C.C."/>
            <person name="Gruber A."/>
            <person name="Katsuyama A.M."/>
            <person name="Kishi L.T."/>
            <person name="Leite R.P."/>
            <person name="Lemos E.G.M."/>
            <person name="Lemos M.V.F."/>
            <person name="Locali E.C."/>
            <person name="Machado M.A."/>
            <person name="Madeira A.M.B.N."/>
            <person name="Martinez-Rossi N.M."/>
            <person name="Martins E.C."/>
            <person name="Meidanis J."/>
            <person name="Menck C.F.M."/>
            <person name="Miyaki C.Y."/>
            <person name="Moon D.H."/>
            <person name="Moreira L.M."/>
            <person name="Novo M.T.M."/>
            <person name="Okura V.K."/>
            <person name="Oliveira M.C."/>
            <person name="Oliveira V.R."/>
            <person name="Pereira H.A."/>
            <person name="Rossi A."/>
            <person name="Sena J.A.D."/>
            <person name="Silva C."/>
            <person name="de Souza R.F."/>
            <person name="Spinola L.A.F."/>
            <person name="Takita M.A."/>
            <person name="Tamura R.E."/>
            <person name="Teixeira E.C."/>
            <person name="Tezza R.I.D."/>
            <person name="Trindade dos Santos M."/>
            <person name="Truffi D."/>
            <person name="Tsai S.M."/>
            <person name="White F.F."/>
            <person name="Setubal J.C."/>
            <person name="Kitajima J.P."/>
        </authorList>
    </citation>
    <scope>NUCLEOTIDE SEQUENCE [LARGE SCALE GENOMIC DNA]</scope>
    <source>
        <strain>306</strain>
    </source>
</reference>
<evidence type="ECO:0000255" key="1">
    <source>
        <dbReference type="HAMAP-Rule" id="MF_00294"/>
    </source>
</evidence>
<evidence type="ECO:0000305" key="2"/>